<proteinExistence type="evidence at protein level"/>
<organism>
    <name type="scientific">Thermus thermophilus (strain ATCC 27634 / DSM 579 / HB8)</name>
    <dbReference type="NCBI Taxonomy" id="300852"/>
    <lineage>
        <taxon>Bacteria</taxon>
        <taxon>Thermotogati</taxon>
        <taxon>Deinococcota</taxon>
        <taxon>Deinococci</taxon>
        <taxon>Thermales</taxon>
        <taxon>Thermaceae</taxon>
        <taxon>Thermus</taxon>
    </lineage>
</organism>
<comment type="function">
    <text evidence="1">CRISPR (clustered regularly interspaced short palindromic repeat), is an adaptive immune system that provides protection against mobile genetic elements (viruses, transposable elements and conjugative plasmids). CRISPR clusters contain sequences complementary to antecedent mobile elements and target invading nucleic acids. CRISPR clusters are transcribed and processed into CRISPR RNA (crRNA). Part of the Cmr ribonucleoprotein complex (By similarity).</text>
</comment>
<comment type="subunit">
    <text evidence="3">Homotrimer.</text>
</comment>
<comment type="subcellular location">
    <subcellularLocation>
        <location evidence="1">Cytoplasm</location>
    </subcellularLocation>
</comment>
<comment type="similarity">
    <text evidence="2">Belongs to the CRISPR system Cmr5 family.</text>
</comment>
<name>CMR5_THET8</name>
<protein>
    <recommendedName>
        <fullName>CRISPR system Cmr subunit Cmr5</fullName>
    </recommendedName>
    <alternativeName>
        <fullName>CRISPR type III-B/RAMP module-associated protein Cmr5</fullName>
    </alternativeName>
</protein>
<accession>Q53W05</accession>
<feature type="chain" id="PRO_0000418435" description="CRISPR system Cmr subunit Cmr5">
    <location>
        <begin position="1"/>
        <end position="114"/>
    </location>
</feature>
<feature type="helix" evidence="4">
    <location>
        <begin position="4"/>
        <end position="19"/>
    </location>
</feature>
<feature type="helix" evidence="4">
    <location>
        <begin position="25"/>
        <end position="42"/>
    </location>
</feature>
<feature type="helix" evidence="4">
    <location>
        <begin position="44"/>
        <end position="52"/>
    </location>
</feature>
<feature type="helix" evidence="4">
    <location>
        <begin position="57"/>
        <end position="69"/>
    </location>
</feature>
<feature type="helix" evidence="4">
    <location>
        <begin position="75"/>
        <end position="84"/>
    </location>
</feature>
<feature type="helix" evidence="4">
    <location>
        <begin position="87"/>
        <end position="111"/>
    </location>
</feature>
<geneLocation type="plasmid">
    <name>pTT27</name>
</geneLocation>
<dbReference type="EMBL" id="AP008227">
    <property type="protein sequence ID" value="BAD71960.1"/>
    <property type="molecule type" value="Genomic_DNA"/>
</dbReference>
<dbReference type="RefSeq" id="WP_011229140.1">
    <property type="nucleotide sequence ID" value="NC_006462.1"/>
</dbReference>
<dbReference type="RefSeq" id="YP_145403.1">
    <property type="nucleotide sequence ID" value="NC_006462.1"/>
</dbReference>
<dbReference type="PDB" id="2ZOP">
    <property type="method" value="X-ray"/>
    <property type="resolution" value="2.10 A"/>
    <property type="chains" value="A/B/C/D/E/F=1-114"/>
</dbReference>
<dbReference type="PDBsum" id="2ZOP"/>
<dbReference type="EMDB" id="EMD-2418"/>
<dbReference type="EMDB" id="EMD-2898"/>
<dbReference type="EMDB" id="EMD-2899"/>
<dbReference type="EMDB" id="EMD-2900"/>
<dbReference type="EMDB" id="EMD-5719"/>
<dbReference type="SMR" id="Q53W05"/>
<dbReference type="DIP" id="DIP-61648N"/>
<dbReference type="IntAct" id="Q53W05">
    <property type="interactions" value="5"/>
</dbReference>
<dbReference type="EnsemblBacteria" id="BAD71960">
    <property type="protein sequence ID" value="BAD71960"/>
    <property type="gene ID" value="BAD71960"/>
</dbReference>
<dbReference type="GeneID" id="3169607"/>
<dbReference type="KEGG" id="ttj:TTHB164"/>
<dbReference type="PATRIC" id="fig|300852.9.peg.2113"/>
<dbReference type="HOGENOM" id="CLU_120836_2_1_0"/>
<dbReference type="EvolutionaryTrace" id="Q53W05"/>
<dbReference type="Proteomes" id="UP000000532">
    <property type="component" value="Plasmid pTT27"/>
</dbReference>
<dbReference type="GO" id="GO:0005737">
    <property type="term" value="C:cytoplasm"/>
    <property type="evidence" value="ECO:0007669"/>
    <property type="project" value="UniProtKB-SubCell"/>
</dbReference>
<dbReference type="GO" id="GO:0051607">
    <property type="term" value="P:defense response to virus"/>
    <property type="evidence" value="ECO:0007669"/>
    <property type="project" value="UniProtKB-KW"/>
</dbReference>
<dbReference type="CDD" id="cd09749">
    <property type="entry name" value="Cmr5_III-B"/>
    <property type="match status" value="1"/>
</dbReference>
<dbReference type="Gene3D" id="1.10.520.30">
    <property type="entry name" value="AF1862-like domain"/>
    <property type="match status" value="1"/>
</dbReference>
<dbReference type="InterPro" id="IPR023101">
    <property type="entry name" value="AF1862-like_dom_sf"/>
</dbReference>
<dbReference type="InterPro" id="IPR010160">
    <property type="entry name" value="CRISPR-assoc_prot_Cmr5"/>
</dbReference>
<dbReference type="NCBIfam" id="TIGR01881">
    <property type="entry name" value="cas_Cmr5"/>
    <property type="match status" value="1"/>
</dbReference>
<dbReference type="Pfam" id="PF09701">
    <property type="entry name" value="Cas_Cmr5"/>
    <property type="match status" value="1"/>
</dbReference>
<dbReference type="SUPFAM" id="SSF158568">
    <property type="entry name" value="AF1862-like"/>
    <property type="match status" value="1"/>
</dbReference>
<sequence>MRTRSQVWAQKAYEKVREAAKGEGRGEYRDMALKLPVLVRQAGLSQALAFVDSRGKEAHKALGNDLAQVLGYRDLRELAEAAREAELLQYLRLTREVLAAAEWFKRFAQALIEE</sequence>
<keyword id="KW-0002">3D-structure</keyword>
<keyword id="KW-0051">Antiviral defense</keyword>
<keyword id="KW-0963">Cytoplasm</keyword>
<keyword id="KW-0614">Plasmid</keyword>
<keyword id="KW-1185">Reference proteome</keyword>
<gene>
    <name type="primary">cmr5</name>
    <name type="ordered locus">TTHB164</name>
</gene>
<reference key="1">
    <citation type="submission" date="2004-11" db="EMBL/GenBank/DDBJ databases">
        <title>Complete genome sequence of Thermus thermophilus HB8.</title>
        <authorList>
            <person name="Masui R."/>
            <person name="Kurokawa K."/>
            <person name="Nakagawa N."/>
            <person name="Tokunaga F."/>
            <person name="Koyama Y."/>
            <person name="Shibata T."/>
            <person name="Oshima T."/>
            <person name="Yokoyama S."/>
            <person name="Yasunaga T."/>
            <person name="Kuramitsu S."/>
        </authorList>
    </citation>
    <scope>NUCLEOTIDE SEQUENCE [LARGE SCALE GENOMIC DNA]</scope>
    <source>
        <strain>ATCC 27634 / DSM 579 / HB8</strain>
    </source>
</reference>
<reference key="2">
    <citation type="journal article" date="2009" name="Proteins">
        <title>X-ray crystal structure of a CRISPR-associated RAMP module Cmr5 protein from Thermus thermophilus HB8.</title>
        <authorList>
            <person name="Sakamoto K."/>
            <person name="Agari Y."/>
            <person name="Agari K."/>
            <person name="Yokoyama S."/>
            <person name="Kuramitsu S."/>
            <person name="Shinkai A."/>
        </authorList>
    </citation>
    <scope>X-RAY CRYSTALLOGRAPHY (2.10 ANGSTROMS)</scope>
    <scope>SUBUNIT</scope>
    <source>
        <strain>ATCC 27634 / DSM 579 / HB8</strain>
    </source>
</reference>
<evidence type="ECO:0000250" key="1"/>
<evidence type="ECO:0000305" key="2"/>
<evidence type="ECO:0000305" key="3">
    <source>
    </source>
</evidence>
<evidence type="ECO:0007829" key="4">
    <source>
        <dbReference type="PDB" id="2ZOP"/>
    </source>
</evidence>